<name>IRAP_SALTI</name>
<organism>
    <name type="scientific">Salmonella typhi</name>
    <dbReference type="NCBI Taxonomy" id="90370"/>
    <lineage>
        <taxon>Bacteria</taxon>
        <taxon>Pseudomonadati</taxon>
        <taxon>Pseudomonadota</taxon>
        <taxon>Gammaproteobacteria</taxon>
        <taxon>Enterobacterales</taxon>
        <taxon>Enterobacteriaceae</taxon>
        <taxon>Salmonella</taxon>
    </lineage>
</organism>
<proteinExistence type="inferred from homology"/>
<reference key="1">
    <citation type="journal article" date="2003" name="J. Bacteriol.">
        <title>Comparative genomics of Salmonella enterica serovar Typhi strains Ty2 and CT18.</title>
        <authorList>
            <person name="Deng W."/>
            <person name="Liou S.-R."/>
            <person name="Plunkett G. III"/>
            <person name="Mayhew G.F."/>
            <person name="Rose D.J."/>
            <person name="Burland V."/>
            <person name="Kodoyianni V."/>
            <person name="Schwartz D.C."/>
            <person name="Blattner F.R."/>
        </authorList>
    </citation>
    <scope>NUCLEOTIDE SEQUENCE [LARGE SCALE GENOMIC DNA]</scope>
    <source>
        <strain>ATCC 700931 / Ty2</strain>
    </source>
</reference>
<reference key="2">
    <citation type="journal article" date="2001" name="Nature">
        <title>Complete genome sequence of a multiple drug resistant Salmonella enterica serovar Typhi CT18.</title>
        <authorList>
            <person name="Parkhill J."/>
            <person name="Dougan G."/>
            <person name="James K.D."/>
            <person name="Thomson N.R."/>
            <person name="Pickard D."/>
            <person name="Wain J."/>
            <person name="Churcher C.M."/>
            <person name="Mungall K.L."/>
            <person name="Bentley S.D."/>
            <person name="Holden M.T.G."/>
            <person name="Sebaihia M."/>
            <person name="Baker S."/>
            <person name="Basham D."/>
            <person name="Brooks K."/>
            <person name="Chillingworth T."/>
            <person name="Connerton P."/>
            <person name="Cronin A."/>
            <person name="Davis P."/>
            <person name="Davies R.M."/>
            <person name="Dowd L."/>
            <person name="White N."/>
            <person name="Farrar J."/>
            <person name="Feltwell T."/>
            <person name="Hamlin N."/>
            <person name="Haque A."/>
            <person name="Hien T.T."/>
            <person name="Holroyd S."/>
            <person name="Jagels K."/>
            <person name="Krogh A."/>
            <person name="Larsen T.S."/>
            <person name="Leather S."/>
            <person name="Moule S."/>
            <person name="O'Gaora P."/>
            <person name="Parry C."/>
            <person name="Quail M.A."/>
            <person name="Rutherford K.M."/>
            <person name="Simmonds M."/>
            <person name="Skelton J."/>
            <person name="Stevens K."/>
            <person name="Whitehead S."/>
            <person name="Barrell B.G."/>
        </authorList>
    </citation>
    <scope>NUCLEOTIDE SEQUENCE [LARGE SCALE GENOMIC DNA]</scope>
    <source>
        <strain>CT18</strain>
    </source>
</reference>
<keyword id="KW-0175">Coiled coil</keyword>
<keyword id="KW-0963">Cytoplasm</keyword>
<keyword id="KW-0346">Stress response</keyword>
<sequence>MKNLIAELLLKLAQKEEESKELVAQVEALEIIVTAMLRNMAQNEQEMLIRQVEGALEGVKPDASVPDHDTELLRQYVKKLLRHPRH</sequence>
<accession>Q8XG49</accession>
<accession>Q7ANH8</accession>
<evidence type="ECO:0000255" key="1">
    <source>
        <dbReference type="HAMAP-Rule" id="MF_01198"/>
    </source>
</evidence>
<evidence type="ECO:0000305" key="2"/>
<dbReference type="EMBL" id="AE014613">
    <property type="protein sequence ID" value="AAO70069.1"/>
    <property type="status" value="ALT_INIT"/>
    <property type="molecule type" value="Genomic_DNA"/>
</dbReference>
<dbReference type="EMBL" id="AL513382">
    <property type="protein sequence ID" value="CAD08838.1"/>
    <property type="status" value="ALT_INIT"/>
    <property type="molecule type" value="Genomic_DNA"/>
</dbReference>
<dbReference type="RefSeq" id="NP_454978.1">
    <property type="nucleotide sequence ID" value="NC_003198.1"/>
</dbReference>
<dbReference type="RefSeq" id="WP_001518423.1">
    <property type="nucleotide sequence ID" value="NZ_WSUR01000017.1"/>
</dbReference>
<dbReference type="SMR" id="Q8XG49"/>
<dbReference type="STRING" id="220341.gene:17584443"/>
<dbReference type="KEGG" id="stt:t2481"/>
<dbReference type="KEGG" id="sty:STY0415"/>
<dbReference type="PATRIC" id="fig|220341.7.peg.412"/>
<dbReference type="eggNOG" id="ENOG5032SF1">
    <property type="taxonomic scope" value="Bacteria"/>
</dbReference>
<dbReference type="HOGENOM" id="CLU_169517_0_0_6"/>
<dbReference type="OMA" id="IDTAMIH"/>
<dbReference type="Proteomes" id="UP000000541">
    <property type="component" value="Chromosome"/>
</dbReference>
<dbReference type="Proteomes" id="UP000002670">
    <property type="component" value="Chromosome"/>
</dbReference>
<dbReference type="GO" id="GO:0005737">
    <property type="term" value="C:cytoplasm"/>
    <property type="evidence" value="ECO:0007669"/>
    <property type="project" value="UniProtKB-SubCell"/>
</dbReference>
<dbReference type="GO" id="GO:0009267">
    <property type="term" value="P:cellular response to starvation"/>
    <property type="evidence" value="ECO:0007669"/>
    <property type="project" value="UniProtKB-UniRule"/>
</dbReference>
<dbReference type="HAMAP" id="MF_01198">
    <property type="entry name" value="Anti_adapt_IraP"/>
    <property type="match status" value="1"/>
</dbReference>
<dbReference type="InterPro" id="IPR019732">
    <property type="entry name" value="SigmaS_Anti-adapt_IraP"/>
</dbReference>
<dbReference type="NCBIfam" id="NF007598">
    <property type="entry name" value="PRK10244.1"/>
    <property type="match status" value="1"/>
</dbReference>
<dbReference type="Pfam" id="PF10796">
    <property type="entry name" value="Anti-adapt_IraP"/>
    <property type="match status" value="1"/>
</dbReference>
<gene>
    <name evidence="1" type="primary">iraP</name>
    <name type="ordered locus">STY0415</name>
    <name type="ordered locus">t2481</name>
</gene>
<comment type="function">
    <text evidence="1">Inhibits RpoS proteolysis by regulating RssB activity, thereby increasing the stability of the sigma stress factor RpoS especially during phosphate and magnesium starvation, but also in stationary phase and during nitrogen starvation. Its effect on RpoS stability is due to its interaction with RssB, which probably blocks the interaction of RssB with RpoS, and the consequent delivery of the RssB-RpoS complex to the ClpXP protein degradation pathway.</text>
</comment>
<comment type="subunit">
    <text evidence="1">Interacts with RssB.</text>
</comment>
<comment type="subcellular location">
    <subcellularLocation>
        <location evidence="1">Cytoplasm</location>
    </subcellularLocation>
</comment>
<comment type="similarity">
    <text evidence="1">Belongs to the IraP family.</text>
</comment>
<comment type="sequence caution" evidence="2">
    <conflict type="erroneous initiation">
        <sequence resource="EMBL-CDS" id="AAO70069"/>
    </conflict>
</comment>
<comment type="sequence caution" evidence="2">
    <conflict type="erroneous initiation">
        <sequence resource="EMBL-CDS" id="CAD08838"/>
    </conflict>
</comment>
<protein>
    <recommendedName>
        <fullName evidence="1">Anti-adapter protein IraP</fullName>
    </recommendedName>
</protein>
<feature type="chain" id="PRO_0000337862" description="Anti-adapter protein IraP">
    <location>
        <begin position="1"/>
        <end position="86"/>
    </location>
</feature>
<feature type="coiled-coil region" evidence="1">
    <location>
        <begin position="1"/>
        <end position="36"/>
    </location>
</feature>